<keyword id="KW-0997">Cell inner membrane</keyword>
<keyword id="KW-1003">Cell membrane</keyword>
<keyword id="KW-0201">Cytochrome c-type biogenesis</keyword>
<keyword id="KW-1015">Disulfide bond</keyword>
<keyword id="KW-0249">Electron transport</keyword>
<keyword id="KW-0472">Membrane</keyword>
<keyword id="KW-0520">NAD</keyword>
<keyword id="KW-0560">Oxidoreductase</keyword>
<keyword id="KW-0676">Redox-active center</keyword>
<keyword id="KW-1185">Reference proteome</keyword>
<keyword id="KW-0732">Signal</keyword>
<keyword id="KW-0812">Transmembrane</keyword>
<keyword id="KW-1133">Transmembrane helix</keyword>
<keyword id="KW-0813">Transport</keyword>
<organism>
    <name type="scientific">Salmonella typhimurium (strain LT2 / SGSC1412 / ATCC 700720)</name>
    <dbReference type="NCBI Taxonomy" id="99287"/>
    <lineage>
        <taxon>Bacteria</taxon>
        <taxon>Pseudomonadati</taxon>
        <taxon>Pseudomonadota</taxon>
        <taxon>Gammaproteobacteria</taxon>
        <taxon>Enterobacterales</taxon>
        <taxon>Enterobacteriaceae</taxon>
        <taxon>Salmonella</taxon>
    </lineage>
</organism>
<sequence length="567" mass="61419">MAQRIFTLILLLCSTSAFAGLFDAPGRSQFVPADRAFVFDFQQNQHDLTLSWQVKEGYYLYRKQISITPTKADIAAVQLPTGVWHEDEFYGKSEIYRKRLNVPVTVNQAAAGATLTVTYQGCADAGFCYPPETKTVPLSEVAAAIDATPTPAVTQTSETSKPAAQLPFSALWALLIGIGIAFTPCVLPMYPLISGIVLGGRQRLSTGRALLLAFIYVQGMALTYTALGLVVAAAGLQFQAALQHPYVLIGLAIVFTLLALSMFGLFTLQLPSSLQTRLTLMSNRQQGGSPGGVFVMGAIAGLICSPCTTAPLSAILLYIAQSGNMWLGGGTLYLYALGMGLPLMLVTVFGNRLLPKSGPWMAHVKTAFGFVILALPVFLLERIIGEAWGLRLWSLLGVAFFGWAFITSLQARRAWMRIVQIILLAAALISVRPLQDWAFGSPSAQAPAHLNFTAISTVDELNQALAQAKGKPVMLDFYADWCVACKEFEKYTFSDPRVQQALGDTVLLQANVTANNAQDVALLKHLQVLGLPTILFFNTQGQEQPQSRVTGFMDAATFSAHLHDRQP</sequence>
<gene>
    <name evidence="1" type="primary">dsbD</name>
    <name type="ordered locus">STM4323</name>
</gene>
<name>DSBD_SALTY</name>
<feature type="signal peptide" evidence="1">
    <location>
        <begin position="1"/>
        <end position="19"/>
    </location>
</feature>
<feature type="chain" id="PRO_0000007386" description="Thiol:disulfide interchange protein DsbD">
    <location>
        <begin position="20"/>
        <end position="567"/>
    </location>
</feature>
<feature type="transmembrane region" description="Helical" evidence="1">
    <location>
        <begin position="170"/>
        <end position="192"/>
    </location>
</feature>
<feature type="transmembrane region" description="Helical" evidence="1">
    <location>
        <begin position="212"/>
        <end position="234"/>
    </location>
</feature>
<feature type="transmembrane region" description="Helical" evidence="1">
    <location>
        <begin position="246"/>
        <end position="268"/>
    </location>
</feature>
<feature type="transmembrane region" description="Helical" evidence="1">
    <location>
        <begin position="297"/>
        <end position="319"/>
    </location>
</feature>
<feature type="transmembrane region" description="Helical" evidence="1">
    <location>
        <begin position="326"/>
        <end position="348"/>
    </location>
</feature>
<feature type="transmembrane region" description="Helical" evidence="1">
    <location>
        <begin position="358"/>
        <end position="380"/>
    </location>
</feature>
<feature type="transmembrane region" description="Helical" evidence="1">
    <location>
        <begin position="387"/>
        <end position="409"/>
    </location>
</feature>
<feature type="domain" description="Thioredoxin" evidence="1">
    <location>
        <begin position="435"/>
        <end position="567"/>
    </location>
</feature>
<feature type="disulfide bond" description="Redox-active" evidence="1">
    <location>
        <begin position="122"/>
        <end position="128"/>
    </location>
</feature>
<feature type="disulfide bond" description="Redox-active" evidence="1">
    <location>
        <begin position="185"/>
        <end position="307"/>
    </location>
</feature>
<feature type="disulfide bond" description="Redox-active" evidence="1">
    <location>
        <begin position="482"/>
        <end position="485"/>
    </location>
</feature>
<proteinExistence type="inferred from homology"/>
<protein>
    <recommendedName>
        <fullName evidence="1">Thiol:disulfide interchange protein DsbD</fullName>
        <ecNumber evidence="1">1.8.1.8</ecNumber>
    </recommendedName>
    <alternativeName>
        <fullName evidence="1">Protein-disulfide reductase</fullName>
        <shortName evidence="1">Disulfide reductase</shortName>
    </alternativeName>
</protein>
<accession>Q8ZKC3</accession>
<comment type="function">
    <text evidence="1">Required to facilitate the formation of correct disulfide bonds in some periplasmic proteins and for the assembly of the periplasmic c-type cytochromes. Acts by transferring electrons from cytoplasmic thioredoxin to the periplasm. This transfer involves a cascade of disulfide bond formation and reduction steps.</text>
</comment>
<comment type="catalytic activity">
    <reaction evidence="1">
        <text>[protein]-dithiol + NAD(+) = [protein]-disulfide + NADH + H(+)</text>
        <dbReference type="Rhea" id="RHEA:18749"/>
        <dbReference type="Rhea" id="RHEA-COMP:10593"/>
        <dbReference type="Rhea" id="RHEA-COMP:10594"/>
        <dbReference type="ChEBI" id="CHEBI:15378"/>
        <dbReference type="ChEBI" id="CHEBI:29950"/>
        <dbReference type="ChEBI" id="CHEBI:50058"/>
        <dbReference type="ChEBI" id="CHEBI:57540"/>
        <dbReference type="ChEBI" id="CHEBI:57945"/>
        <dbReference type="EC" id="1.8.1.8"/>
    </reaction>
</comment>
<comment type="catalytic activity">
    <reaction evidence="1">
        <text>[protein]-dithiol + NADP(+) = [protein]-disulfide + NADPH + H(+)</text>
        <dbReference type="Rhea" id="RHEA:18753"/>
        <dbReference type="Rhea" id="RHEA-COMP:10593"/>
        <dbReference type="Rhea" id="RHEA-COMP:10594"/>
        <dbReference type="ChEBI" id="CHEBI:15378"/>
        <dbReference type="ChEBI" id="CHEBI:29950"/>
        <dbReference type="ChEBI" id="CHEBI:50058"/>
        <dbReference type="ChEBI" id="CHEBI:57783"/>
        <dbReference type="ChEBI" id="CHEBI:58349"/>
        <dbReference type="EC" id="1.8.1.8"/>
    </reaction>
</comment>
<comment type="subcellular location">
    <subcellularLocation>
        <location evidence="1">Cell inner membrane</location>
        <topology evidence="1">Multi-pass membrane protein</topology>
    </subcellularLocation>
</comment>
<comment type="similarity">
    <text evidence="1">Belongs to the thioredoxin family. DsbD subfamily.</text>
</comment>
<dbReference type="EC" id="1.8.1.8" evidence="1"/>
<dbReference type="EMBL" id="AE006468">
    <property type="protein sequence ID" value="AAL23146.1"/>
    <property type="molecule type" value="Genomic_DNA"/>
</dbReference>
<dbReference type="RefSeq" id="NP_463187.1">
    <property type="nucleotide sequence ID" value="NC_003197.2"/>
</dbReference>
<dbReference type="RefSeq" id="WP_000068899.1">
    <property type="nucleotide sequence ID" value="NC_003197.2"/>
</dbReference>
<dbReference type="SMR" id="Q8ZKC3"/>
<dbReference type="STRING" id="99287.STM4323"/>
<dbReference type="PaxDb" id="99287-STM4323"/>
<dbReference type="GeneID" id="1255849"/>
<dbReference type="KEGG" id="stm:STM4323"/>
<dbReference type="PATRIC" id="fig|99287.12.peg.4548"/>
<dbReference type="HOGENOM" id="CLU_014657_3_0_6"/>
<dbReference type="OMA" id="WPIIPMT"/>
<dbReference type="PhylomeDB" id="Q8ZKC3"/>
<dbReference type="BioCyc" id="SENT99287:STM4323-MONOMER"/>
<dbReference type="Proteomes" id="UP000001014">
    <property type="component" value="Chromosome"/>
</dbReference>
<dbReference type="GO" id="GO:0005886">
    <property type="term" value="C:plasma membrane"/>
    <property type="evidence" value="ECO:0007669"/>
    <property type="project" value="UniProtKB-SubCell"/>
</dbReference>
<dbReference type="GO" id="GO:0009055">
    <property type="term" value="F:electron transfer activity"/>
    <property type="evidence" value="ECO:0007669"/>
    <property type="project" value="UniProtKB-UniRule"/>
</dbReference>
<dbReference type="GO" id="GO:0047134">
    <property type="term" value="F:protein-disulfide reductase [NAD(P)H] activity"/>
    <property type="evidence" value="ECO:0007669"/>
    <property type="project" value="UniProtKB-UniRule"/>
</dbReference>
<dbReference type="GO" id="GO:0015035">
    <property type="term" value="F:protein-disulfide reductase activity"/>
    <property type="evidence" value="ECO:0000318"/>
    <property type="project" value="GO_Central"/>
</dbReference>
<dbReference type="GO" id="GO:0045454">
    <property type="term" value="P:cell redox homeostasis"/>
    <property type="evidence" value="ECO:0000318"/>
    <property type="project" value="GO_Central"/>
</dbReference>
<dbReference type="GO" id="GO:0017004">
    <property type="term" value="P:cytochrome complex assembly"/>
    <property type="evidence" value="ECO:0007669"/>
    <property type="project" value="UniProtKB-UniRule"/>
</dbReference>
<dbReference type="CDD" id="cd02953">
    <property type="entry name" value="DsbDgamma"/>
    <property type="match status" value="1"/>
</dbReference>
<dbReference type="FunFam" id="2.60.40.1250:FF:000001">
    <property type="entry name" value="Thiol:disulfide interchange protein DsbD"/>
    <property type="match status" value="1"/>
</dbReference>
<dbReference type="FunFam" id="3.40.30.10:FF:000116">
    <property type="entry name" value="Thiol:disulfide interchange protein DsbD"/>
    <property type="match status" value="1"/>
</dbReference>
<dbReference type="Gene3D" id="3.40.30.10">
    <property type="entry name" value="Glutaredoxin"/>
    <property type="match status" value="1"/>
</dbReference>
<dbReference type="Gene3D" id="2.60.40.1250">
    <property type="entry name" value="Thiol:disulfide interchange protein DsbD, N-terminal domain"/>
    <property type="match status" value="1"/>
</dbReference>
<dbReference type="HAMAP" id="MF_00399">
    <property type="entry name" value="DbsD"/>
    <property type="match status" value="1"/>
</dbReference>
<dbReference type="InterPro" id="IPR003834">
    <property type="entry name" value="Cyt_c_assmbl_TM_dom"/>
</dbReference>
<dbReference type="InterPro" id="IPR035671">
    <property type="entry name" value="DsbD_gamma"/>
</dbReference>
<dbReference type="InterPro" id="IPR028250">
    <property type="entry name" value="DsbDN"/>
</dbReference>
<dbReference type="InterPro" id="IPR036929">
    <property type="entry name" value="DsbDN_sf"/>
</dbReference>
<dbReference type="InterPro" id="IPR022910">
    <property type="entry name" value="Thiol_diS_interchange_DbsD"/>
</dbReference>
<dbReference type="InterPro" id="IPR036249">
    <property type="entry name" value="Thioredoxin-like_sf"/>
</dbReference>
<dbReference type="InterPro" id="IPR017937">
    <property type="entry name" value="Thioredoxin_CS"/>
</dbReference>
<dbReference type="InterPro" id="IPR013766">
    <property type="entry name" value="Thioredoxin_domain"/>
</dbReference>
<dbReference type="NCBIfam" id="NF001419">
    <property type="entry name" value="PRK00293.1"/>
    <property type="match status" value="1"/>
</dbReference>
<dbReference type="PANTHER" id="PTHR32234">
    <property type="entry name" value="THIOL:DISULFIDE INTERCHANGE PROTEIN DSBD"/>
    <property type="match status" value="1"/>
</dbReference>
<dbReference type="PANTHER" id="PTHR32234:SF0">
    <property type="entry name" value="THIOL:DISULFIDE INTERCHANGE PROTEIN DSBD"/>
    <property type="match status" value="1"/>
</dbReference>
<dbReference type="Pfam" id="PF11412">
    <property type="entry name" value="DsbD_N"/>
    <property type="match status" value="1"/>
</dbReference>
<dbReference type="Pfam" id="PF02683">
    <property type="entry name" value="DsbD_TM"/>
    <property type="match status" value="1"/>
</dbReference>
<dbReference type="Pfam" id="PF13899">
    <property type="entry name" value="Thioredoxin_7"/>
    <property type="match status" value="1"/>
</dbReference>
<dbReference type="SUPFAM" id="SSF74863">
    <property type="entry name" value="Thiol:disulfide interchange protein DsbD, N-terminal domain (DsbD-alpha)"/>
    <property type="match status" value="1"/>
</dbReference>
<dbReference type="SUPFAM" id="SSF52833">
    <property type="entry name" value="Thioredoxin-like"/>
    <property type="match status" value="1"/>
</dbReference>
<dbReference type="PROSITE" id="PS00194">
    <property type="entry name" value="THIOREDOXIN_1"/>
    <property type="match status" value="1"/>
</dbReference>
<dbReference type="PROSITE" id="PS51352">
    <property type="entry name" value="THIOREDOXIN_2"/>
    <property type="match status" value="1"/>
</dbReference>
<evidence type="ECO:0000255" key="1">
    <source>
        <dbReference type="HAMAP-Rule" id="MF_00399"/>
    </source>
</evidence>
<reference key="1">
    <citation type="journal article" date="2001" name="Nature">
        <title>Complete genome sequence of Salmonella enterica serovar Typhimurium LT2.</title>
        <authorList>
            <person name="McClelland M."/>
            <person name="Sanderson K.E."/>
            <person name="Spieth J."/>
            <person name="Clifton S.W."/>
            <person name="Latreille P."/>
            <person name="Courtney L."/>
            <person name="Porwollik S."/>
            <person name="Ali J."/>
            <person name="Dante M."/>
            <person name="Du F."/>
            <person name="Hou S."/>
            <person name="Layman D."/>
            <person name="Leonard S."/>
            <person name="Nguyen C."/>
            <person name="Scott K."/>
            <person name="Holmes A."/>
            <person name="Grewal N."/>
            <person name="Mulvaney E."/>
            <person name="Ryan E."/>
            <person name="Sun H."/>
            <person name="Florea L."/>
            <person name="Miller W."/>
            <person name="Stoneking T."/>
            <person name="Nhan M."/>
            <person name="Waterston R."/>
            <person name="Wilson R.K."/>
        </authorList>
    </citation>
    <scope>NUCLEOTIDE SEQUENCE [LARGE SCALE GENOMIC DNA]</scope>
    <source>
        <strain>LT2 / SGSC1412 / ATCC 700720</strain>
    </source>
</reference>